<proteinExistence type="inferred from homology"/>
<comment type="function">
    <text evidence="1">Catalyzes the synthesis of GMP from XMP.</text>
</comment>
<comment type="catalytic activity">
    <reaction evidence="1">
        <text>XMP + L-glutamine + ATP + H2O = GMP + L-glutamate + AMP + diphosphate + 2 H(+)</text>
        <dbReference type="Rhea" id="RHEA:11680"/>
        <dbReference type="ChEBI" id="CHEBI:15377"/>
        <dbReference type="ChEBI" id="CHEBI:15378"/>
        <dbReference type="ChEBI" id="CHEBI:29985"/>
        <dbReference type="ChEBI" id="CHEBI:30616"/>
        <dbReference type="ChEBI" id="CHEBI:33019"/>
        <dbReference type="ChEBI" id="CHEBI:57464"/>
        <dbReference type="ChEBI" id="CHEBI:58115"/>
        <dbReference type="ChEBI" id="CHEBI:58359"/>
        <dbReference type="ChEBI" id="CHEBI:456215"/>
        <dbReference type="EC" id="6.3.5.2"/>
    </reaction>
</comment>
<comment type="pathway">
    <text evidence="1">Purine metabolism; GMP biosynthesis; GMP from XMP (L-Gln route): step 1/1.</text>
</comment>
<comment type="subunit">
    <text evidence="1">Homodimer.</text>
</comment>
<reference key="1">
    <citation type="journal article" date="2009" name="J. Bacteriol.">
        <title>The genome of Thermosipho africanus TCF52B: lateral genetic connections to the Firmicutes and Archaea.</title>
        <authorList>
            <person name="Nesboe C.L."/>
            <person name="Bapteste E."/>
            <person name="Curtis B."/>
            <person name="Dahle H."/>
            <person name="Lopez P."/>
            <person name="Macleod D."/>
            <person name="Dlutek M."/>
            <person name="Bowman S."/>
            <person name="Zhaxybayeva O."/>
            <person name="Birkeland N.-K."/>
            <person name="Doolittle W.F."/>
        </authorList>
    </citation>
    <scope>NUCLEOTIDE SEQUENCE [LARGE SCALE GENOMIC DNA]</scope>
    <source>
        <strain>TCF52B</strain>
    </source>
</reference>
<gene>
    <name evidence="1" type="primary">guaA</name>
    <name type="ordered locus">THA_1090</name>
</gene>
<protein>
    <recommendedName>
        <fullName evidence="1">GMP synthase [glutamine-hydrolyzing]</fullName>
        <ecNumber evidence="1">6.3.5.2</ecNumber>
    </recommendedName>
    <alternativeName>
        <fullName evidence="1">GMP synthetase</fullName>
    </alternativeName>
    <alternativeName>
        <fullName evidence="1">Glutamine amidotransferase</fullName>
    </alternativeName>
</protein>
<accession>B7IHI2</accession>
<keyword id="KW-0067">ATP-binding</keyword>
<keyword id="KW-0315">Glutamine amidotransferase</keyword>
<keyword id="KW-0332">GMP biosynthesis</keyword>
<keyword id="KW-0436">Ligase</keyword>
<keyword id="KW-0547">Nucleotide-binding</keyword>
<keyword id="KW-0658">Purine biosynthesis</keyword>
<keyword id="KW-1185">Reference proteome</keyword>
<organism>
    <name type="scientific">Thermosipho africanus (strain TCF52B)</name>
    <dbReference type="NCBI Taxonomy" id="484019"/>
    <lineage>
        <taxon>Bacteria</taxon>
        <taxon>Thermotogati</taxon>
        <taxon>Thermotogota</taxon>
        <taxon>Thermotogae</taxon>
        <taxon>Thermotogales</taxon>
        <taxon>Fervidobacteriaceae</taxon>
        <taxon>Thermosipho</taxon>
    </lineage>
</organism>
<feature type="chain" id="PRO_1000120444" description="GMP synthase [glutamine-hydrolyzing]">
    <location>
        <begin position="1"/>
        <end position="513"/>
    </location>
</feature>
<feature type="domain" description="Glutamine amidotransferase type-1" evidence="1">
    <location>
        <begin position="3"/>
        <end position="192"/>
    </location>
</feature>
<feature type="domain" description="GMPS ATP-PPase" evidence="1">
    <location>
        <begin position="193"/>
        <end position="388"/>
    </location>
</feature>
<feature type="active site" description="Nucleophile" evidence="1">
    <location>
        <position position="80"/>
    </location>
</feature>
<feature type="active site" evidence="1">
    <location>
        <position position="166"/>
    </location>
</feature>
<feature type="active site" evidence="1">
    <location>
        <position position="168"/>
    </location>
</feature>
<feature type="binding site" evidence="1">
    <location>
        <begin position="220"/>
        <end position="226"/>
    </location>
    <ligand>
        <name>ATP</name>
        <dbReference type="ChEBI" id="CHEBI:30616"/>
    </ligand>
</feature>
<sequence length="513" mass="57995">MNTVVVLDYGSQYTQLIVRRVREKGYYAELLPWDASKEEVQNLNPAAIILSGGPASVFEKDAPFVPDYILELNIPILGICYGLQSLVHKFGGIVEKSPKREFGHAVLKVKDDPLFEGLPKEFDVWMSHSDRVEKLPEGFLVIGESENSPYAAIRNKDGTIYGVQFHPEVTHTSFGDKILENFVSKVAKMEKNWKMTDFIEEKINEIRKVVGNDKVILGLSGGVDSSVVALLLDKAIGKNSIPIFVDTGLLRLNERQEVEENFRKLGIDIVVVDAKERFLSNLKGVEDPEEKRKIIGHTFIDVFYEASMKLLEKHGNIKYLAQGTLYPDIIESKVSERKAAAKIKTHHNVGGLPEKLPFKIIEPFRYLFKDEVRKIGKILGLPDEMINRHPFPGPGLAVRIIGEVTNEAIKILQHADHIFIEELKKNDLYDKVWQAFAVFLPIRSVGVMGDYRTYDNVIALRAVNSFDGMTADWSKLPHEFLNKVAKRIVNEVDGVNRVVYDITSKPPATIEWE</sequence>
<name>GUAA_THEAB</name>
<dbReference type="EC" id="6.3.5.2" evidence="1"/>
<dbReference type="EMBL" id="CP001185">
    <property type="protein sequence ID" value="ACJ75546.1"/>
    <property type="molecule type" value="Genomic_DNA"/>
</dbReference>
<dbReference type="RefSeq" id="WP_012579994.1">
    <property type="nucleotide sequence ID" value="NC_011653.1"/>
</dbReference>
<dbReference type="SMR" id="B7IHI2"/>
<dbReference type="STRING" id="484019.THA_1090"/>
<dbReference type="MEROPS" id="C26.957"/>
<dbReference type="KEGG" id="taf:THA_1090"/>
<dbReference type="eggNOG" id="COG0518">
    <property type="taxonomic scope" value="Bacteria"/>
</dbReference>
<dbReference type="eggNOG" id="COG0519">
    <property type="taxonomic scope" value="Bacteria"/>
</dbReference>
<dbReference type="HOGENOM" id="CLU_014340_0_5_0"/>
<dbReference type="OrthoDB" id="9802219at2"/>
<dbReference type="UniPathway" id="UPA00189">
    <property type="reaction ID" value="UER00296"/>
</dbReference>
<dbReference type="Proteomes" id="UP000002453">
    <property type="component" value="Chromosome"/>
</dbReference>
<dbReference type="GO" id="GO:0005829">
    <property type="term" value="C:cytosol"/>
    <property type="evidence" value="ECO:0007669"/>
    <property type="project" value="TreeGrafter"/>
</dbReference>
<dbReference type="GO" id="GO:0005524">
    <property type="term" value="F:ATP binding"/>
    <property type="evidence" value="ECO:0007669"/>
    <property type="project" value="UniProtKB-UniRule"/>
</dbReference>
<dbReference type="GO" id="GO:0003921">
    <property type="term" value="F:GMP synthase activity"/>
    <property type="evidence" value="ECO:0007669"/>
    <property type="project" value="InterPro"/>
</dbReference>
<dbReference type="CDD" id="cd01742">
    <property type="entry name" value="GATase1_GMP_Synthase"/>
    <property type="match status" value="1"/>
</dbReference>
<dbReference type="CDD" id="cd01997">
    <property type="entry name" value="GMP_synthase_C"/>
    <property type="match status" value="1"/>
</dbReference>
<dbReference type="FunFam" id="3.30.300.10:FF:000002">
    <property type="entry name" value="GMP synthase [glutamine-hydrolyzing]"/>
    <property type="match status" value="1"/>
</dbReference>
<dbReference type="FunFam" id="3.40.50.620:FF:000001">
    <property type="entry name" value="GMP synthase [glutamine-hydrolyzing]"/>
    <property type="match status" value="1"/>
</dbReference>
<dbReference type="FunFam" id="3.40.50.880:FF:000001">
    <property type="entry name" value="GMP synthase [glutamine-hydrolyzing]"/>
    <property type="match status" value="1"/>
</dbReference>
<dbReference type="Gene3D" id="3.30.300.10">
    <property type="match status" value="1"/>
</dbReference>
<dbReference type="Gene3D" id="3.40.50.880">
    <property type="match status" value="1"/>
</dbReference>
<dbReference type="Gene3D" id="3.40.50.620">
    <property type="entry name" value="HUPs"/>
    <property type="match status" value="1"/>
</dbReference>
<dbReference type="HAMAP" id="MF_00344">
    <property type="entry name" value="GMP_synthase"/>
    <property type="match status" value="1"/>
</dbReference>
<dbReference type="InterPro" id="IPR029062">
    <property type="entry name" value="Class_I_gatase-like"/>
</dbReference>
<dbReference type="InterPro" id="IPR017926">
    <property type="entry name" value="GATASE"/>
</dbReference>
<dbReference type="InterPro" id="IPR001674">
    <property type="entry name" value="GMP_synth_C"/>
</dbReference>
<dbReference type="InterPro" id="IPR004739">
    <property type="entry name" value="GMP_synth_GATase"/>
</dbReference>
<dbReference type="InterPro" id="IPR022955">
    <property type="entry name" value="GMP_synthase"/>
</dbReference>
<dbReference type="InterPro" id="IPR025777">
    <property type="entry name" value="GMPS_ATP_PPase_dom"/>
</dbReference>
<dbReference type="InterPro" id="IPR022310">
    <property type="entry name" value="NAD/GMP_synthase"/>
</dbReference>
<dbReference type="InterPro" id="IPR014729">
    <property type="entry name" value="Rossmann-like_a/b/a_fold"/>
</dbReference>
<dbReference type="NCBIfam" id="TIGR00884">
    <property type="entry name" value="guaA_Cterm"/>
    <property type="match status" value="1"/>
</dbReference>
<dbReference type="NCBIfam" id="TIGR00888">
    <property type="entry name" value="guaA_Nterm"/>
    <property type="match status" value="1"/>
</dbReference>
<dbReference type="NCBIfam" id="NF000848">
    <property type="entry name" value="PRK00074.1"/>
    <property type="match status" value="1"/>
</dbReference>
<dbReference type="PANTHER" id="PTHR11922:SF2">
    <property type="entry name" value="GMP SYNTHASE [GLUTAMINE-HYDROLYZING]"/>
    <property type="match status" value="1"/>
</dbReference>
<dbReference type="PANTHER" id="PTHR11922">
    <property type="entry name" value="GMP SYNTHASE-RELATED"/>
    <property type="match status" value="1"/>
</dbReference>
<dbReference type="Pfam" id="PF00117">
    <property type="entry name" value="GATase"/>
    <property type="match status" value="1"/>
</dbReference>
<dbReference type="Pfam" id="PF00958">
    <property type="entry name" value="GMP_synt_C"/>
    <property type="match status" value="1"/>
</dbReference>
<dbReference type="Pfam" id="PF02540">
    <property type="entry name" value="NAD_synthase"/>
    <property type="match status" value="1"/>
</dbReference>
<dbReference type="PRINTS" id="PR00097">
    <property type="entry name" value="ANTSNTHASEII"/>
</dbReference>
<dbReference type="PRINTS" id="PR00096">
    <property type="entry name" value="GATASE"/>
</dbReference>
<dbReference type="SUPFAM" id="SSF52402">
    <property type="entry name" value="Adenine nucleotide alpha hydrolases-like"/>
    <property type="match status" value="1"/>
</dbReference>
<dbReference type="SUPFAM" id="SSF52317">
    <property type="entry name" value="Class I glutamine amidotransferase-like"/>
    <property type="match status" value="1"/>
</dbReference>
<dbReference type="SUPFAM" id="SSF54810">
    <property type="entry name" value="GMP synthetase C-terminal dimerisation domain"/>
    <property type="match status" value="1"/>
</dbReference>
<dbReference type="PROSITE" id="PS51273">
    <property type="entry name" value="GATASE_TYPE_1"/>
    <property type="match status" value="1"/>
</dbReference>
<dbReference type="PROSITE" id="PS51553">
    <property type="entry name" value="GMPS_ATP_PPASE"/>
    <property type="match status" value="1"/>
</dbReference>
<evidence type="ECO:0000255" key="1">
    <source>
        <dbReference type="HAMAP-Rule" id="MF_00344"/>
    </source>
</evidence>